<keyword id="KW-0131">Cell cycle</keyword>
<keyword id="KW-0132">Cell division</keyword>
<keyword id="KW-0963">Cytoplasm</keyword>
<keyword id="KW-0342">GTP-binding</keyword>
<keyword id="KW-0547">Nucleotide-binding</keyword>
<keyword id="KW-1185">Reference proteome</keyword>
<keyword id="KW-0717">Septation</keyword>
<feature type="chain" id="PRO_0000114361" description="Cell division protein FtsZ">
    <location>
        <begin position="1"/>
        <end position="380"/>
    </location>
</feature>
<feature type="binding site" evidence="1">
    <location>
        <begin position="27"/>
        <end position="31"/>
    </location>
    <ligand>
        <name>GTP</name>
        <dbReference type="ChEBI" id="CHEBI:37565"/>
    </ligand>
</feature>
<feature type="binding site" evidence="1">
    <location>
        <begin position="119"/>
        <end position="121"/>
    </location>
    <ligand>
        <name>GTP</name>
        <dbReference type="ChEBI" id="CHEBI:37565"/>
    </ligand>
</feature>
<feature type="binding site" evidence="1">
    <location>
        <position position="150"/>
    </location>
    <ligand>
        <name>GTP</name>
        <dbReference type="ChEBI" id="CHEBI:37565"/>
    </ligand>
</feature>
<feature type="binding site" evidence="1">
    <location>
        <position position="189"/>
    </location>
    <ligand>
        <name>GTP</name>
        <dbReference type="ChEBI" id="CHEBI:37565"/>
    </ligand>
</feature>
<proteinExistence type="inferred from homology"/>
<organism>
    <name type="scientific">Mycoplasma pneumoniae (strain ATCC 29342 / M129 / Subtype 1)</name>
    <name type="common">Mycoplasmoides pneumoniae</name>
    <dbReference type="NCBI Taxonomy" id="272634"/>
    <lineage>
        <taxon>Bacteria</taxon>
        <taxon>Bacillati</taxon>
        <taxon>Mycoplasmatota</taxon>
        <taxon>Mycoplasmoidales</taxon>
        <taxon>Mycoplasmoidaceae</taxon>
        <taxon>Mycoplasmoides</taxon>
    </lineage>
</organism>
<name>FTSZ_MYCPN</name>
<dbReference type="EMBL" id="U00089">
    <property type="protein sequence ID" value="AAB96167.1"/>
    <property type="molecule type" value="Genomic_DNA"/>
</dbReference>
<dbReference type="PIR" id="S73845">
    <property type="entry name" value="S73845"/>
</dbReference>
<dbReference type="RefSeq" id="NP_110005.1">
    <property type="nucleotide sequence ID" value="NC_000912.1"/>
</dbReference>
<dbReference type="RefSeq" id="WP_010874673.1">
    <property type="nucleotide sequence ID" value="NZ_OU342337.1"/>
</dbReference>
<dbReference type="SMR" id="P75464"/>
<dbReference type="IntAct" id="P75464">
    <property type="interactions" value="4"/>
</dbReference>
<dbReference type="STRING" id="272634.MPN_317"/>
<dbReference type="EnsemblBacteria" id="AAB96167">
    <property type="protein sequence ID" value="AAB96167"/>
    <property type="gene ID" value="MPN_317"/>
</dbReference>
<dbReference type="KEGG" id="mpn:MPN_317"/>
<dbReference type="PATRIC" id="fig|272634.6.peg.340"/>
<dbReference type="HOGENOM" id="CLU_024865_1_1_14"/>
<dbReference type="OrthoDB" id="9813375at2"/>
<dbReference type="BioCyc" id="MPNE272634:G1GJ3-507-MONOMER"/>
<dbReference type="Proteomes" id="UP000000808">
    <property type="component" value="Chromosome"/>
</dbReference>
<dbReference type="GO" id="GO:0032153">
    <property type="term" value="C:cell division site"/>
    <property type="evidence" value="ECO:0007669"/>
    <property type="project" value="UniProtKB-UniRule"/>
</dbReference>
<dbReference type="GO" id="GO:0005737">
    <property type="term" value="C:cytoplasm"/>
    <property type="evidence" value="ECO:0007669"/>
    <property type="project" value="UniProtKB-SubCell"/>
</dbReference>
<dbReference type="GO" id="GO:0005525">
    <property type="term" value="F:GTP binding"/>
    <property type="evidence" value="ECO:0007669"/>
    <property type="project" value="UniProtKB-UniRule"/>
</dbReference>
<dbReference type="GO" id="GO:0003924">
    <property type="term" value="F:GTPase activity"/>
    <property type="evidence" value="ECO:0007669"/>
    <property type="project" value="UniProtKB-UniRule"/>
</dbReference>
<dbReference type="GO" id="GO:0000917">
    <property type="term" value="P:division septum assembly"/>
    <property type="evidence" value="ECO:0007669"/>
    <property type="project" value="UniProtKB-KW"/>
</dbReference>
<dbReference type="GO" id="GO:0043093">
    <property type="term" value="P:FtsZ-dependent cytokinesis"/>
    <property type="evidence" value="ECO:0007669"/>
    <property type="project" value="UniProtKB-UniRule"/>
</dbReference>
<dbReference type="GO" id="GO:0051258">
    <property type="term" value="P:protein polymerization"/>
    <property type="evidence" value="ECO:0007669"/>
    <property type="project" value="UniProtKB-UniRule"/>
</dbReference>
<dbReference type="CDD" id="cd02201">
    <property type="entry name" value="FtsZ_type1"/>
    <property type="match status" value="1"/>
</dbReference>
<dbReference type="Gene3D" id="3.40.50.1440">
    <property type="entry name" value="Tubulin/FtsZ, GTPase domain"/>
    <property type="match status" value="1"/>
</dbReference>
<dbReference type="HAMAP" id="MF_00909">
    <property type="entry name" value="FtsZ"/>
    <property type="match status" value="1"/>
</dbReference>
<dbReference type="InterPro" id="IPR000158">
    <property type="entry name" value="Cell_div_FtsZ"/>
</dbReference>
<dbReference type="InterPro" id="IPR020805">
    <property type="entry name" value="Cell_div_FtsZ_CS"/>
</dbReference>
<dbReference type="InterPro" id="IPR045061">
    <property type="entry name" value="FtsZ/CetZ"/>
</dbReference>
<dbReference type="InterPro" id="IPR036525">
    <property type="entry name" value="Tubulin/FtsZ_GTPase_sf"/>
</dbReference>
<dbReference type="InterPro" id="IPR003008">
    <property type="entry name" value="Tubulin_FtsZ_GTPase"/>
</dbReference>
<dbReference type="NCBIfam" id="TIGR00065">
    <property type="entry name" value="ftsZ"/>
    <property type="match status" value="1"/>
</dbReference>
<dbReference type="PANTHER" id="PTHR30314">
    <property type="entry name" value="CELL DIVISION PROTEIN FTSZ-RELATED"/>
    <property type="match status" value="1"/>
</dbReference>
<dbReference type="PANTHER" id="PTHR30314:SF3">
    <property type="entry name" value="MITOCHONDRIAL DIVISION PROTEIN FSZA"/>
    <property type="match status" value="1"/>
</dbReference>
<dbReference type="Pfam" id="PF00091">
    <property type="entry name" value="Tubulin"/>
    <property type="match status" value="1"/>
</dbReference>
<dbReference type="PRINTS" id="PR00423">
    <property type="entry name" value="CELLDVISFTSZ"/>
</dbReference>
<dbReference type="SMART" id="SM00864">
    <property type="entry name" value="Tubulin"/>
    <property type="match status" value="1"/>
</dbReference>
<dbReference type="SUPFAM" id="SSF52490">
    <property type="entry name" value="Tubulin nucleotide-binding domain-like"/>
    <property type="match status" value="1"/>
</dbReference>
<dbReference type="PROSITE" id="PS01134">
    <property type="entry name" value="FTSZ_1"/>
    <property type="match status" value="1"/>
</dbReference>
<dbReference type="PROSITE" id="PS01135">
    <property type="entry name" value="FTSZ_2"/>
    <property type="match status" value="1"/>
</dbReference>
<comment type="function">
    <text evidence="1">Essential cell division protein that forms a contractile ring structure (Z ring) at the future cell division site. The regulation of the ring assembly controls the timing and the location of cell division. One of the functions of the FtsZ ring is to recruit other cell division proteins to the septum to produce a new cell wall between the dividing cells. Binds GTP and shows GTPase activity.</text>
</comment>
<comment type="subunit">
    <text evidence="1">Homodimer. Polymerizes to form a dynamic ring structure in a strictly GTP-dependent manner. Interacts directly with several other division proteins.</text>
</comment>
<comment type="subcellular location">
    <subcellularLocation>
        <location evidence="1">Cytoplasm</location>
    </subcellularLocation>
    <text evidence="1">Assembles at midcell at the inner surface of the cytoplasmic membrane.</text>
</comment>
<comment type="similarity">
    <text evidence="1">Belongs to the FtsZ family.</text>
</comment>
<protein>
    <recommendedName>
        <fullName evidence="1">Cell division protein FtsZ</fullName>
    </recommendedName>
</protein>
<sequence length="380" mass="42797">MDWIQTAGAGTQLPENNIKIAVFGIGGAGNNIIDDMLRMHPELQTANVQFFALNTDLQHLKTKRYVQNKAVIQFEESKGLGVGGDPQKGAVLAHHFLEQFHKLSDSFDFCILVAGFGKGTGTGATPVFSKFLSNKGVLNLSIVSYPAMCEGLKAREKAAKGLERLNQATDSFMLFRNDRCTDGIYQLANVAIVKTIKNIIELINLPLQQNIDFEDIRSFFKKPAQRLENEANLFRVTNTFTFSFDAHNTIEHFSHKLKNFEYEGFFDHKVEGAQKVILKVLVNQGLYPLDLTQIQEIIWAKIDNHNLEVQLGVDFTDANPSVQLFFLMEKKQAVSSDFIQKPAFISVKEVNQKPAKPFQVLNDLKELGLKYVKQQTGFNY</sequence>
<accession>P75464</accession>
<evidence type="ECO:0000255" key="1">
    <source>
        <dbReference type="HAMAP-Rule" id="MF_00909"/>
    </source>
</evidence>
<reference key="1">
    <citation type="journal article" date="1996" name="Nucleic Acids Res.">
        <title>Complete sequence analysis of the genome of the bacterium Mycoplasma pneumoniae.</title>
        <authorList>
            <person name="Himmelreich R."/>
            <person name="Hilbert H."/>
            <person name="Plagens H."/>
            <person name="Pirkl E."/>
            <person name="Li B.-C."/>
            <person name="Herrmann R."/>
        </authorList>
    </citation>
    <scope>NUCLEOTIDE SEQUENCE [LARGE SCALE GENOMIC DNA]</scope>
    <source>
        <strain>ATCC 29342 / M129 / Subtype 1</strain>
    </source>
</reference>
<gene>
    <name evidence="1" type="primary">ftsZ</name>
    <name type="ordered locus">MPN_317</name>
    <name type="ORF">MP519</name>
</gene>